<reference key="1">
    <citation type="journal article" date="2005" name="Proc. Natl. Acad. Sci. U.S.A.">
        <title>Comparison of the complete genome sequences of Pseudomonas syringae pv. syringae B728a and pv. tomato DC3000.</title>
        <authorList>
            <person name="Feil H."/>
            <person name="Feil W.S."/>
            <person name="Chain P."/>
            <person name="Larimer F."/>
            <person name="Dibartolo G."/>
            <person name="Copeland A."/>
            <person name="Lykidis A."/>
            <person name="Trong S."/>
            <person name="Nolan M."/>
            <person name="Goltsman E."/>
            <person name="Thiel J."/>
            <person name="Malfatti S."/>
            <person name="Loper J.E."/>
            <person name="Lapidus A."/>
            <person name="Detter J.C."/>
            <person name="Land M."/>
            <person name="Richardson P.M."/>
            <person name="Kyrpides N.C."/>
            <person name="Ivanova N."/>
            <person name="Lindow S.E."/>
        </authorList>
    </citation>
    <scope>NUCLEOTIDE SEQUENCE [LARGE SCALE GENOMIC DNA]</scope>
    <source>
        <strain>B728a</strain>
    </source>
</reference>
<proteinExistence type="inferred from homology"/>
<organism>
    <name type="scientific">Pseudomonas syringae pv. syringae (strain B728a)</name>
    <dbReference type="NCBI Taxonomy" id="205918"/>
    <lineage>
        <taxon>Bacteria</taxon>
        <taxon>Pseudomonadati</taxon>
        <taxon>Pseudomonadota</taxon>
        <taxon>Gammaproteobacteria</taxon>
        <taxon>Pseudomonadales</taxon>
        <taxon>Pseudomonadaceae</taxon>
        <taxon>Pseudomonas</taxon>
        <taxon>Pseudomonas syringae</taxon>
    </lineage>
</organism>
<name>MTND_PSEU2</name>
<protein>
    <recommendedName>
        <fullName evidence="1">Acireductone dioxygenase</fullName>
    </recommendedName>
    <alternativeName>
        <fullName evidence="1">1,2-dihydroxy-3-keto-5-methylthiopentene dioxygenase</fullName>
        <shortName evidence="1">DHK-MTPene dioxygenase</shortName>
    </alternativeName>
    <alternativeName>
        <fullName evidence="1">Acireductone dioxygenase (Fe(2+)-requiring)</fullName>
        <shortName evidence="1">ARD'</shortName>
        <shortName evidence="1">Fe-ARD</shortName>
        <ecNumber evidence="1">1.13.11.54</ecNumber>
    </alternativeName>
    <alternativeName>
        <fullName evidence="1">Acireductone dioxygenase (Ni(2+)-requiring)</fullName>
        <shortName evidence="1">ARD</shortName>
        <shortName evidence="1">Ni-ARD</shortName>
        <ecNumber evidence="1">1.13.11.53</ecNumber>
    </alternativeName>
</protein>
<comment type="function">
    <text evidence="1">Catalyzes 2 different reactions between oxygen and the acireductone 1,2-dihydroxy-3-keto-5-methylthiopentene (DHK-MTPene) depending upon the metal bound in the active site. Fe-containing acireductone dioxygenase (Fe-ARD) produces formate and 2-keto-4-methylthiobutyrate (KMTB), the alpha-ketoacid precursor of methionine in the methionine recycle pathway. Ni-containing acireductone dioxygenase (Ni-ARD) produces methylthiopropionate, carbon monoxide and formate, and does not lie on the methionine recycle pathway.</text>
</comment>
<comment type="catalytic activity">
    <reaction evidence="1">
        <text>1,2-dihydroxy-5-(methylsulfanyl)pent-1-en-3-one + O2 = 3-(methylsulfanyl)propanoate + CO + formate + 2 H(+)</text>
        <dbReference type="Rhea" id="RHEA:14161"/>
        <dbReference type="ChEBI" id="CHEBI:15378"/>
        <dbReference type="ChEBI" id="CHEBI:15379"/>
        <dbReference type="ChEBI" id="CHEBI:15740"/>
        <dbReference type="ChEBI" id="CHEBI:17245"/>
        <dbReference type="ChEBI" id="CHEBI:49016"/>
        <dbReference type="ChEBI" id="CHEBI:49252"/>
        <dbReference type="EC" id="1.13.11.53"/>
    </reaction>
</comment>
<comment type="catalytic activity">
    <reaction evidence="1">
        <text>1,2-dihydroxy-5-(methylsulfanyl)pent-1-en-3-one + O2 = 4-methylsulfanyl-2-oxobutanoate + formate + 2 H(+)</text>
        <dbReference type="Rhea" id="RHEA:24504"/>
        <dbReference type="ChEBI" id="CHEBI:15378"/>
        <dbReference type="ChEBI" id="CHEBI:15379"/>
        <dbReference type="ChEBI" id="CHEBI:15740"/>
        <dbReference type="ChEBI" id="CHEBI:16723"/>
        <dbReference type="ChEBI" id="CHEBI:49252"/>
        <dbReference type="EC" id="1.13.11.54"/>
    </reaction>
</comment>
<comment type="cofactor">
    <cofactor evidence="1">
        <name>Fe(2+)</name>
        <dbReference type="ChEBI" id="CHEBI:29033"/>
    </cofactor>
    <text evidence="1">Binds 1 Fe(2+) cation per monomer.</text>
</comment>
<comment type="cofactor">
    <cofactor evidence="1">
        <name>Ni(2+)</name>
        <dbReference type="ChEBI" id="CHEBI:49786"/>
    </cofactor>
    <text evidence="1">Binds 1 nickel ion per monomer.</text>
</comment>
<comment type="pathway">
    <text evidence="1">Amino-acid biosynthesis; L-methionine biosynthesis via salvage pathway; L-methionine from S-methyl-5-thio-alpha-D-ribose 1-phosphate: step 5/6.</text>
</comment>
<comment type="subunit">
    <text evidence="1">Monomer.</text>
</comment>
<comment type="similarity">
    <text evidence="1">Belongs to the acireductone dioxygenase (ARD) family.</text>
</comment>
<sequence length="181" mass="20458">MSSLSVYHVSSPDMPNKVLTHLEDIASTLAEHGVAFDRWEAATPITPGASQEEVISAYRTQIDTLMTERGYVTVDVISLNSDHPQKAELRARFLEEHRHGEDEVRFFVAGRGLFTLHIDDYVYAVLCEKNDLISVPAGTRHWFDMGENPHFVAIRLFNNPEGWVANFTGEDIAGRFPRLED</sequence>
<keyword id="KW-0028">Amino-acid biosynthesis</keyword>
<keyword id="KW-0223">Dioxygenase</keyword>
<keyword id="KW-0408">Iron</keyword>
<keyword id="KW-0479">Metal-binding</keyword>
<keyword id="KW-0486">Methionine biosynthesis</keyword>
<keyword id="KW-0533">Nickel</keyword>
<keyword id="KW-0560">Oxidoreductase</keyword>
<accession>Q4ZVB9</accession>
<gene>
    <name evidence="1" type="primary">mtnD</name>
    <name type="ordered locus">Psyr_1856</name>
</gene>
<feature type="chain" id="PRO_0000359224" description="Acireductone dioxygenase">
    <location>
        <begin position="1"/>
        <end position="181"/>
    </location>
</feature>
<feature type="binding site" evidence="1">
    <location>
        <position position="97"/>
    </location>
    <ligand>
        <name>Fe(2+)</name>
        <dbReference type="ChEBI" id="CHEBI:29033"/>
    </ligand>
</feature>
<feature type="binding site" evidence="1">
    <location>
        <position position="97"/>
    </location>
    <ligand>
        <name>Ni(2+)</name>
        <dbReference type="ChEBI" id="CHEBI:49786"/>
    </ligand>
</feature>
<feature type="binding site" evidence="1">
    <location>
        <position position="99"/>
    </location>
    <ligand>
        <name>Fe(2+)</name>
        <dbReference type="ChEBI" id="CHEBI:29033"/>
    </ligand>
</feature>
<feature type="binding site" evidence="1">
    <location>
        <position position="99"/>
    </location>
    <ligand>
        <name>Ni(2+)</name>
        <dbReference type="ChEBI" id="CHEBI:49786"/>
    </ligand>
</feature>
<feature type="binding site" evidence="1">
    <location>
        <position position="103"/>
    </location>
    <ligand>
        <name>Fe(2+)</name>
        <dbReference type="ChEBI" id="CHEBI:29033"/>
    </ligand>
</feature>
<feature type="binding site" evidence="1">
    <location>
        <position position="103"/>
    </location>
    <ligand>
        <name>Ni(2+)</name>
        <dbReference type="ChEBI" id="CHEBI:49786"/>
    </ligand>
</feature>
<feature type="binding site" evidence="1">
    <location>
        <position position="141"/>
    </location>
    <ligand>
        <name>Fe(2+)</name>
        <dbReference type="ChEBI" id="CHEBI:29033"/>
    </ligand>
</feature>
<feature type="binding site" evidence="1">
    <location>
        <position position="141"/>
    </location>
    <ligand>
        <name>Ni(2+)</name>
        <dbReference type="ChEBI" id="CHEBI:49786"/>
    </ligand>
</feature>
<feature type="site" description="May play a role in metal incorporation in vivo" evidence="1">
    <location>
        <position position="96"/>
    </location>
</feature>
<feature type="site" description="May play a role in transmitting local conformational changes" evidence="1">
    <location>
        <position position="102"/>
    </location>
</feature>
<feature type="site" description="Important to generate the dianion" evidence="1">
    <location>
        <position position="105"/>
    </location>
</feature>
<dbReference type="EC" id="1.13.11.54" evidence="1"/>
<dbReference type="EC" id="1.13.11.53" evidence="1"/>
<dbReference type="EMBL" id="CP000075">
    <property type="protein sequence ID" value="AAY36903.1"/>
    <property type="molecule type" value="Genomic_DNA"/>
</dbReference>
<dbReference type="RefSeq" id="WP_011267284.1">
    <property type="nucleotide sequence ID" value="NC_007005.1"/>
</dbReference>
<dbReference type="RefSeq" id="YP_234941.1">
    <property type="nucleotide sequence ID" value="NC_007005.1"/>
</dbReference>
<dbReference type="SMR" id="Q4ZVB9"/>
<dbReference type="STRING" id="205918.Psyr_1856"/>
<dbReference type="KEGG" id="psb:Psyr_1856"/>
<dbReference type="PATRIC" id="fig|205918.7.peg.1900"/>
<dbReference type="eggNOG" id="COG1791">
    <property type="taxonomic scope" value="Bacteria"/>
</dbReference>
<dbReference type="HOGENOM" id="CLU_125400_0_0_6"/>
<dbReference type="OrthoDB" id="9795636at2"/>
<dbReference type="UniPathway" id="UPA00904">
    <property type="reaction ID" value="UER00878"/>
</dbReference>
<dbReference type="Proteomes" id="UP000000426">
    <property type="component" value="Chromosome"/>
</dbReference>
<dbReference type="GO" id="GO:0010308">
    <property type="term" value="F:acireductone dioxygenase (Ni2+-requiring) activity"/>
    <property type="evidence" value="ECO:0007669"/>
    <property type="project" value="UniProtKB-UniRule"/>
</dbReference>
<dbReference type="GO" id="GO:0010309">
    <property type="term" value="F:acireductone dioxygenase [iron(II)-requiring] activity"/>
    <property type="evidence" value="ECO:0007669"/>
    <property type="project" value="UniProtKB-UniRule"/>
</dbReference>
<dbReference type="GO" id="GO:0005506">
    <property type="term" value="F:iron ion binding"/>
    <property type="evidence" value="ECO:0007669"/>
    <property type="project" value="UniProtKB-UniRule"/>
</dbReference>
<dbReference type="GO" id="GO:0016151">
    <property type="term" value="F:nickel cation binding"/>
    <property type="evidence" value="ECO:0007669"/>
    <property type="project" value="UniProtKB-UniRule"/>
</dbReference>
<dbReference type="GO" id="GO:0019509">
    <property type="term" value="P:L-methionine salvage from methylthioadenosine"/>
    <property type="evidence" value="ECO:0007669"/>
    <property type="project" value="UniProtKB-UniRule"/>
</dbReference>
<dbReference type="GO" id="GO:0019284">
    <property type="term" value="P:L-methionine salvage from S-adenosylmethionine"/>
    <property type="evidence" value="ECO:0007669"/>
    <property type="project" value="InterPro"/>
</dbReference>
<dbReference type="CDD" id="cd02232">
    <property type="entry name" value="cupin_ARD"/>
    <property type="match status" value="1"/>
</dbReference>
<dbReference type="Gene3D" id="2.60.120.10">
    <property type="entry name" value="Jelly Rolls"/>
    <property type="match status" value="1"/>
</dbReference>
<dbReference type="HAMAP" id="MF_01682">
    <property type="entry name" value="Salvage_MtnD"/>
    <property type="match status" value="1"/>
</dbReference>
<dbReference type="InterPro" id="IPR004313">
    <property type="entry name" value="ARD"/>
</dbReference>
<dbReference type="InterPro" id="IPR023956">
    <property type="entry name" value="ARD_bac"/>
</dbReference>
<dbReference type="InterPro" id="IPR014710">
    <property type="entry name" value="RmlC-like_jellyroll"/>
</dbReference>
<dbReference type="InterPro" id="IPR011051">
    <property type="entry name" value="RmlC_Cupin_sf"/>
</dbReference>
<dbReference type="PANTHER" id="PTHR23418">
    <property type="entry name" value="ACIREDUCTONE DIOXYGENASE"/>
    <property type="match status" value="1"/>
</dbReference>
<dbReference type="PANTHER" id="PTHR23418:SF0">
    <property type="entry name" value="ACIREDUCTONE DIOXYGENASE"/>
    <property type="match status" value="1"/>
</dbReference>
<dbReference type="Pfam" id="PF03079">
    <property type="entry name" value="ARD"/>
    <property type="match status" value="1"/>
</dbReference>
<dbReference type="SUPFAM" id="SSF51182">
    <property type="entry name" value="RmlC-like cupins"/>
    <property type="match status" value="1"/>
</dbReference>
<evidence type="ECO:0000255" key="1">
    <source>
        <dbReference type="HAMAP-Rule" id="MF_01682"/>
    </source>
</evidence>